<organism>
    <name type="scientific">Streptococcus agalactiae serotype Ia (strain ATCC 27591 / A909 / CDC SS700)</name>
    <dbReference type="NCBI Taxonomy" id="205921"/>
    <lineage>
        <taxon>Bacteria</taxon>
        <taxon>Bacillati</taxon>
        <taxon>Bacillota</taxon>
        <taxon>Bacilli</taxon>
        <taxon>Lactobacillales</taxon>
        <taxon>Streptococcaceae</taxon>
        <taxon>Streptococcus</taxon>
    </lineage>
</organism>
<reference key="1">
    <citation type="journal article" date="2005" name="Proc. Natl. Acad. Sci. U.S.A.">
        <title>Genome analysis of multiple pathogenic isolates of Streptococcus agalactiae: implications for the microbial 'pan-genome'.</title>
        <authorList>
            <person name="Tettelin H."/>
            <person name="Masignani V."/>
            <person name="Cieslewicz M.J."/>
            <person name="Donati C."/>
            <person name="Medini D."/>
            <person name="Ward N.L."/>
            <person name="Angiuoli S.V."/>
            <person name="Crabtree J."/>
            <person name="Jones A.L."/>
            <person name="Durkin A.S."/>
            <person name="DeBoy R.T."/>
            <person name="Davidsen T.M."/>
            <person name="Mora M."/>
            <person name="Scarselli M."/>
            <person name="Margarit y Ros I."/>
            <person name="Peterson J.D."/>
            <person name="Hauser C.R."/>
            <person name="Sundaram J.P."/>
            <person name="Nelson W.C."/>
            <person name="Madupu R."/>
            <person name="Brinkac L.M."/>
            <person name="Dodson R.J."/>
            <person name="Rosovitz M.J."/>
            <person name="Sullivan S.A."/>
            <person name="Daugherty S.C."/>
            <person name="Haft D.H."/>
            <person name="Selengut J."/>
            <person name="Gwinn M.L."/>
            <person name="Zhou L."/>
            <person name="Zafar N."/>
            <person name="Khouri H."/>
            <person name="Radune D."/>
            <person name="Dimitrov G."/>
            <person name="Watkins K."/>
            <person name="O'Connor K.J."/>
            <person name="Smith S."/>
            <person name="Utterback T.R."/>
            <person name="White O."/>
            <person name="Rubens C.E."/>
            <person name="Grandi G."/>
            <person name="Madoff L.C."/>
            <person name="Kasper D.L."/>
            <person name="Telford J.L."/>
            <person name="Wessels M.R."/>
            <person name="Rappuoli R."/>
            <person name="Fraser C.M."/>
        </authorList>
    </citation>
    <scope>NUCLEOTIDE SEQUENCE [LARGE SCALE GENOMIC DNA]</scope>
    <source>
        <strain>ATCC 27591 / A909 / CDC SS700</strain>
    </source>
</reference>
<dbReference type="EC" id="3.1.11.6" evidence="1"/>
<dbReference type="EMBL" id="CP000114">
    <property type="protein sequence ID" value="ABA46203.1"/>
    <property type="molecule type" value="Genomic_DNA"/>
</dbReference>
<dbReference type="RefSeq" id="WP_001280900.1">
    <property type="nucleotide sequence ID" value="NC_007432.1"/>
</dbReference>
<dbReference type="SMR" id="Q3K2M3"/>
<dbReference type="KEGG" id="sak:SAK_0598"/>
<dbReference type="HOGENOM" id="CLU_145918_3_2_9"/>
<dbReference type="GO" id="GO:0005829">
    <property type="term" value="C:cytosol"/>
    <property type="evidence" value="ECO:0007669"/>
    <property type="project" value="TreeGrafter"/>
</dbReference>
<dbReference type="GO" id="GO:0009318">
    <property type="term" value="C:exodeoxyribonuclease VII complex"/>
    <property type="evidence" value="ECO:0007669"/>
    <property type="project" value="InterPro"/>
</dbReference>
<dbReference type="GO" id="GO:0008855">
    <property type="term" value="F:exodeoxyribonuclease VII activity"/>
    <property type="evidence" value="ECO:0007669"/>
    <property type="project" value="UniProtKB-UniRule"/>
</dbReference>
<dbReference type="GO" id="GO:0006308">
    <property type="term" value="P:DNA catabolic process"/>
    <property type="evidence" value="ECO:0007669"/>
    <property type="project" value="UniProtKB-UniRule"/>
</dbReference>
<dbReference type="Gene3D" id="1.10.287.1040">
    <property type="entry name" value="Exonuclease VII, small subunit"/>
    <property type="match status" value="1"/>
</dbReference>
<dbReference type="HAMAP" id="MF_00337">
    <property type="entry name" value="Exonuc_7_S"/>
    <property type="match status" value="1"/>
</dbReference>
<dbReference type="InterPro" id="IPR003761">
    <property type="entry name" value="Exonuc_VII_S"/>
</dbReference>
<dbReference type="InterPro" id="IPR037004">
    <property type="entry name" value="Exonuc_VII_ssu_sf"/>
</dbReference>
<dbReference type="NCBIfam" id="NF002138">
    <property type="entry name" value="PRK00977.1-2"/>
    <property type="match status" value="1"/>
</dbReference>
<dbReference type="NCBIfam" id="TIGR01280">
    <property type="entry name" value="xseB"/>
    <property type="match status" value="1"/>
</dbReference>
<dbReference type="PANTHER" id="PTHR34137">
    <property type="entry name" value="EXODEOXYRIBONUCLEASE 7 SMALL SUBUNIT"/>
    <property type="match status" value="1"/>
</dbReference>
<dbReference type="PANTHER" id="PTHR34137:SF1">
    <property type="entry name" value="EXODEOXYRIBONUCLEASE 7 SMALL SUBUNIT"/>
    <property type="match status" value="1"/>
</dbReference>
<dbReference type="Pfam" id="PF02609">
    <property type="entry name" value="Exonuc_VII_S"/>
    <property type="match status" value="1"/>
</dbReference>
<dbReference type="PIRSF" id="PIRSF006488">
    <property type="entry name" value="Exonuc_VII_S"/>
    <property type="match status" value="1"/>
</dbReference>
<dbReference type="SUPFAM" id="SSF116842">
    <property type="entry name" value="XseB-like"/>
    <property type="match status" value="1"/>
</dbReference>
<sequence length="71" mass="8035">MSDKKTFEENLQELETIVSRLETGDVALEDAIAEFQKGMLISKELQRTLKEAEETLVKVMQADGTEVEMDT</sequence>
<accession>Q3K2M3</accession>
<proteinExistence type="inferred from homology"/>
<feature type="chain" id="PRO_0000303754" description="Exodeoxyribonuclease 7 small subunit">
    <location>
        <begin position="1"/>
        <end position="71"/>
    </location>
</feature>
<keyword id="KW-0963">Cytoplasm</keyword>
<keyword id="KW-0269">Exonuclease</keyword>
<keyword id="KW-0378">Hydrolase</keyword>
<keyword id="KW-0540">Nuclease</keyword>
<evidence type="ECO:0000255" key="1">
    <source>
        <dbReference type="HAMAP-Rule" id="MF_00337"/>
    </source>
</evidence>
<gene>
    <name evidence="1" type="primary">xseB</name>
    <name type="ordered locus">SAK_0598</name>
</gene>
<protein>
    <recommendedName>
        <fullName evidence="1">Exodeoxyribonuclease 7 small subunit</fullName>
        <ecNumber evidence="1">3.1.11.6</ecNumber>
    </recommendedName>
    <alternativeName>
        <fullName evidence="1">Exodeoxyribonuclease VII small subunit</fullName>
        <shortName evidence="1">Exonuclease VII small subunit</shortName>
    </alternativeName>
</protein>
<name>EX7S_STRA1</name>
<comment type="function">
    <text evidence="1">Bidirectionally degrades single-stranded DNA into large acid-insoluble oligonucleotides, which are then degraded further into small acid-soluble oligonucleotides.</text>
</comment>
<comment type="catalytic activity">
    <reaction evidence="1">
        <text>Exonucleolytic cleavage in either 5'- to 3'- or 3'- to 5'-direction to yield nucleoside 5'-phosphates.</text>
        <dbReference type="EC" id="3.1.11.6"/>
    </reaction>
</comment>
<comment type="subunit">
    <text evidence="1">Heterooligomer composed of large and small subunits.</text>
</comment>
<comment type="subcellular location">
    <subcellularLocation>
        <location evidence="1">Cytoplasm</location>
    </subcellularLocation>
</comment>
<comment type="similarity">
    <text evidence="1">Belongs to the XseB family.</text>
</comment>